<gene>
    <name evidence="7" type="primary">IQD3</name>
    <name evidence="9" type="ordered locus">At3g52290</name>
    <name evidence="10" type="ORF">T25B15.60</name>
</gene>
<comment type="function">
    <text evidence="1">May be involved in cooperative interactions with calmodulins or calmodulin-like proteins (By similarity). Recruits calmodulin proteins to microtubules, thus being a potential scaffold in cellular signaling and trafficking (By similarity). May associate with nucleic acids and regulate gene expression at the transcriptional or post-transcriptional level (By similarity).</text>
</comment>
<comment type="subunit">
    <text evidence="1">Binds to multiple calmodulin (CaM) in the presence of Ca(2+) and CaM-like proteins.</text>
</comment>
<comment type="subcellular location">
    <subcellularLocation>
        <location evidence="4">Nucleus</location>
    </subcellularLocation>
    <subcellularLocation>
        <location evidence="6">Nucleus</location>
        <location evidence="6">Nucleolus</location>
    </subcellularLocation>
    <subcellularLocation>
        <location evidence="6">Cytoplasm</location>
        <location evidence="6">Cytoskeleton</location>
    </subcellularLocation>
</comment>
<comment type="similarity">
    <text evidence="8">Belongs to the IQD family.</text>
</comment>
<accession>Q9FT53</accession>
<accession>A0A178VCT8</accession>
<protein>
    <recommendedName>
        <fullName evidence="7">Protein IQ-DOMAIN 3</fullName>
        <shortName evidence="7">AtIQD3</shortName>
    </recommendedName>
</protein>
<proteinExistence type="evidence at protein level"/>
<name>IQD3_ARATH</name>
<organism>
    <name type="scientific">Arabidopsis thaliana</name>
    <name type="common">Mouse-ear cress</name>
    <dbReference type="NCBI Taxonomy" id="3702"/>
    <lineage>
        <taxon>Eukaryota</taxon>
        <taxon>Viridiplantae</taxon>
        <taxon>Streptophyta</taxon>
        <taxon>Embryophyta</taxon>
        <taxon>Tracheophyta</taxon>
        <taxon>Spermatophyta</taxon>
        <taxon>Magnoliopsida</taxon>
        <taxon>eudicotyledons</taxon>
        <taxon>Gunneridae</taxon>
        <taxon>Pentapetalae</taxon>
        <taxon>rosids</taxon>
        <taxon>malvids</taxon>
        <taxon>Brassicales</taxon>
        <taxon>Brassicaceae</taxon>
        <taxon>Camelineae</taxon>
        <taxon>Arabidopsis</taxon>
    </lineage>
</organism>
<feature type="chain" id="PRO_0000453110" description="Protein IQ-DOMAIN 3">
    <location>
        <begin position="1"/>
        <end position="430"/>
    </location>
</feature>
<feature type="domain" description="IQ" evidence="3">
    <location>
        <begin position="107"/>
        <end position="135"/>
    </location>
</feature>
<feature type="region of interest" description="Disordered" evidence="5">
    <location>
        <begin position="1"/>
        <end position="36"/>
    </location>
</feature>
<feature type="region of interest" description="Calmodulin-binding" evidence="7">
    <location>
        <begin position="213"/>
        <end position="231"/>
    </location>
</feature>
<feature type="region of interest" description="Disordered" evidence="5">
    <location>
        <begin position="271"/>
        <end position="368"/>
    </location>
</feature>
<feature type="region of interest" description="Disordered" evidence="5">
    <location>
        <begin position="385"/>
        <end position="430"/>
    </location>
</feature>
<feature type="coiled-coil region" evidence="2">
    <location>
        <begin position="170"/>
        <end position="224"/>
    </location>
</feature>
<feature type="short sequence motif" description="Nuclear localization signal 1" evidence="4">
    <location>
        <begin position="9"/>
        <end position="16"/>
    </location>
</feature>
<feature type="short sequence motif" description="Nuclear localization signal 2" evidence="4">
    <location>
        <begin position="396"/>
        <end position="403"/>
    </location>
</feature>
<feature type="compositionally biased region" description="Basic residues" evidence="5">
    <location>
        <begin position="23"/>
        <end position="35"/>
    </location>
</feature>
<feature type="compositionally biased region" description="Low complexity" evidence="5">
    <location>
        <begin position="286"/>
        <end position="295"/>
    </location>
</feature>
<feature type="compositionally biased region" description="Polar residues" evidence="5">
    <location>
        <begin position="326"/>
        <end position="340"/>
    </location>
</feature>
<evidence type="ECO:0000250" key="1">
    <source>
        <dbReference type="UniProtKB" id="Q9SF32"/>
    </source>
</evidence>
<evidence type="ECO:0000255" key="2"/>
<evidence type="ECO:0000255" key="3">
    <source>
        <dbReference type="PROSITE-ProRule" id="PRU00116"/>
    </source>
</evidence>
<evidence type="ECO:0000255" key="4">
    <source>
        <dbReference type="PROSITE-ProRule" id="PRU00768"/>
    </source>
</evidence>
<evidence type="ECO:0000256" key="5">
    <source>
        <dbReference type="SAM" id="MobiDB-lite"/>
    </source>
</evidence>
<evidence type="ECO:0000269" key="6">
    <source>
    </source>
</evidence>
<evidence type="ECO:0000303" key="7">
    <source>
    </source>
</evidence>
<evidence type="ECO:0000305" key="8"/>
<evidence type="ECO:0000312" key="9">
    <source>
        <dbReference type="Araport" id="AT3G52290"/>
    </source>
</evidence>
<evidence type="ECO:0000312" key="10">
    <source>
        <dbReference type="EMBL" id="CAC07920.1"/>
    </source>
</evidence>
<sequence>MGKSWFSAVKKALSPEPKQKKEQKPHKSKKWFGKSKKLDVTNSGAAYSPRTVKDAKLKEIEEQQSRHAYSVAIATAAAAEAAVAAAQAAAEVVRLSALSRFPGKSMEEIAAIKIQTAFRGYMARRALRALRGLVRLKSLVQGKCVRRQATSTLQSMQTLARVQYQIRERRLRLSEDKQALTRQLQQKHNKDFDKTGENWNDSTLSREKVEANMLNKQVATMRREKALAYAFSHQNTWKNSTKMGSQTFMDPNNPHWGWSWLERWMAARPNENHSLTPDNAEKDSSARSVASRAMSEMIPRGKNLSPRGKTPNSRRGSSPRVRQVPSEDSNSIVSFQSEQPCNRRHSTCGSIPSTRDDESFTSSFSQSVPGYMAPTQAAKARARFSNLSPLSSEKTAKKRLSFSGSPKTVRRFSGPPKLESNVTKKDTNLA</sequence>
<reference key="1">
    <citation type="journal article" date="2000" name="Nature">
        <title>Sequence and analysis of chromosome 3 of the plant Arabidopsis thaliana.</title>
        <authorList>
            <person name="Salanoubat M."/>
            <person name="Lemcke K."/>
            <person name="Rieger M."/>
            <person name="Ansorge W."/>
            <person name="Unseld M."/>
            <person name="Fartmann B."/>
            <person name="Valle G."/>
            <person name="Bloecker H."/>
            <person name="Perez-Alonso M."/>
            <person name="Obermaier B."/>
            <person name="Delseny M."/>
            <person name="Boutry M."/>
            <person name="Grivell L.A."/>
            <person name="Mache R."/>
            <person name="Puigdomenech P."/>
            <person name="De Simone V."/>
            <person name="Choisne N."/>
            <person name="Artiguenave F."/>
            <person name="Robert C."/>
            <person name="Brottier P."/>
            <person name="Wincker P."/>
            <person name="Cattolico L."/>
            <person name="Weissenbach J."/>
            <person name="Saurin W."/>
            <person name="Quetier F."/>
            <person name="Schaefer M."/>
            <person name="Mueller-Auer S."/>
            <person name="Gabel C."/>
            <person name="Fuchs M."/>
            <person name="Benes V."/>
            <person name="Wurmbach E."/>
            <person name="Drzonek H."/>
            <person name="Erfle H."/>
            <person name="Jordan N."/>
            <person name="Bangert S."/>
            <person name="Wiedelmann R."/>
            <person name="Kranz H."/>
            <person name="Voss H."/>
            <person name="Holland R."/>
            <person name="Brandt P."/>
            <person name="Nyakatura G."/>
            <person name="Vezzi A."/>
            <person name="D'Angelo M."/>
            <person name="Pallavicini A."/>
            <person name="Toppo S."/>
            <person name="Simionati B."/>
            <person name="Conrad A."/>
            <person name="Hornischer K."/>
            <person name="Kauer G."/>
            <person name="Loehnert T.-H."/>
            <person name="Nordsiek G."/>
            <person name="Reichelt J."/>
            <person name="Scharfe M."/>
            <person name="Schoen O."/>
            <person name="Bargues M."/>
            <person name="Terol J."/>
            <person name="Climent J."/>
            <person name="Navarro P."/>
            <person name="Collado C."/>
            <person name="Perez-Perez A."/>
            <person name="Ottenwaelder B."/>
            <person name="Duchemin D."/>
            <person name="Cooke R."/>
            <person name="Laudie M."/>
            <person name="Berger-Llauro C."/>
            <person name="Purnelle B."/>
            <person name="Masuy D."/>
            <person name="de Haan M."/>
            <person name="Maarse A.C."/>
            <person name="Alcaraz J.-P."/>
            <person name="Cottet A."/>
            <person name="Casacuberta E."/>
            <person name="Monfort A."/>
            <person name="Argiriou A."/>
            <person name="Flores M."/>
            <person name="Liguori R."/>
            <person name="Vitale D."/>
            <person name="Mannhaupt G."/>
            <person name="Haase D."/>
            <person name="Schoof H."/>
            <person name="Rudd S."/>
            <person name="Zaccaria P."/>
            <person name="Mewes H.-W."/>
            <person name="Mayer K.F.X."/>
            <person name="Kaul S."/>
            <person name="Town C.D."/>
            <person name="Koo H.L."/>
            <person name="Tallon L.J."/>
            <person name="Jenkins J."/>
            <person name="Rooney T."/>
            <person name="Rizzo M."/>
            <person name="Walts A."/>
            <person name="Utterback T."/>
            <person name="Fujii C.Y."/>
            <person name="Shea T.P."/>
            <person name="Creasy T.H."/>
            <person name="Haas B."/>
            <person name="Maiti R."/>
            <person name="Wu D."/>
            <person name="Peterson J."/>
            <person name="Van Aken S."/>
            <person name="Pai G."/>
            <person name="Militscher J."/>
            <person name="Sellers P."/>
            <person name="Gill J.E."/>
            <person name="Feldblyum T.V."/>
            <person name="Preuss D."/>
            <person name="Lin X."/>
            <person name="Nierman W.C."/>
            <person name="Salzberg S.L."/>
            <person name="White O."/>
            <person name="Venter J.C."/>
            <person name="Fraser C.M."/>
            <person name="Kaneko T."/>
            <person name="Nakamura Y."/>
            <person name="Sato S."/>
            <person name="Kato T."/>
            <person name="Asamizu E."/>
            <person name="Sasamoto S."/>
            <person name="Kimura T."/>
            <person name="Idesawa K."/>
            <person name="Kawashima K."/>
            <person name="Kishida Y."/>
            <person name="Kiyokawa C."/>
            <person name="Kohara M."/>
            <person name="Matsumoto M."/>
            <person name="Matsuno A."/>
            <person name="Muraki A."/>
            <person name="Nakayama S."/>
            <person name="Nakazaki N."/>
            <person name="Shinpo S."/>
            <person name="Takeuchi C."/>
            <person name="Wada T."/>
            <person name="Watanabe A."/>
            <person name="Yamada M."/>
            <person name="Yasuda M."/>
            <person name="Tabata S."/>
        </authorList>
    </citation>
    <scope>NUCLEOTIDE SEQUENCE [LARGE SCALE GENOMIC DNA]</scope>
    <source>
        <strain>cv. Columbia</strain>
    </source>
</reference>
<reference key="2">
    <citation type="journal article" date="2017" name="Plant J.">
        <title>Araport11: a complete reannotation of the Arabidopsis thaliana reference genome.</title>
        <authorList>
            <person name="Cheng C.Y."/>
            <person name="Krishnakumar V."/>
            <person name="Chan A.P."/>
            <person name="Thibaud-Nissen F."/>
            <person name="Schobel S."/>
            <person name="Town C.D."/>
        </authorList>
    </citation>
    <scope>GENOME REANNOTATION</scope>
    <source>
        <strain>cv. Columbia</strain>
    </source>
</reference>
<reference key="3">
    <citation type="journal article" date="2003" name="Science">
        <title>Empirical analysis of transcriptional activity in the Arabidopsis genome.</title>
        <authorList>
            <person name="Yamada K."/>
            <person name="Lim J."/>
            <person name="Dale J.M."/>
            <person name="Chen H."/>
            <person name="Shinn P."/>
            <person name="Palm C.J."/>
            <person name="Southwick A.M."/>
            <person name="Wu H.C."/>
            <person name="Kim C.J."/>
            <person name="Nguyen M."/>
            <person name="Pham P.K."/>
            <person name="Cheuk R.F."/>
            <person name="Karlin-Newmann G."/>
            <person name="Liu S.X."/>
            <person name="Lam B."/>
            <person name="Sakano H."/>
            <person name="Wu T."/>
            <person name="Yu G."/>
            <person name="Miranda M."/>
            <person name="Quach H.L."/>
            <person name="Tripp M."/>
            <person name="Chang C.H."/>
            <person name="Lee J.M."/>
            <person name="Toriumi M.J."/>
            <person name="Chan M.M."/>
            <person name="Tang C.C."/>
            <person name="Onodera C.S."/>
            <person name="Deng J.M."/>
            <person name="Akiyama K."/>
            <person name="Ansari Y."/>
            <person name="Arakawa T."/>
            <person name="Banh J."/>
            <person name="Banno F."/>
            <person name="Bowser L."/>
            <person name="Brooks S.Y."/>
            <person name="Carninci P."/>
            <person name="Chao Q."/>
            <person name="Choy N."/>
            <person name="Enju A."/>
            <person name="Goldsmith A.D."/>
            <person name="Gurjal M."/>
            <person name="Hansen N.F."/>
            <person name="Hayashizaki Y."/>
            <person name="Johnson-Hopson C."/>
            <person name="Hsuan V.W."/>
            <person name="Iida K."/>
            <person name="Karnes M."/>
            <person name="Khan S."/>
            <person name="Koesema E."/>
            <person name="Ishida J."/>
            <person name="Jiang P.X."/>
            <person name="Jones T."/>
            <person name="Kawai J."/>
            <person name="Kamiya A."/>
            <person name="Meyers C."/>
            <person name="Nakajima M."/>
            <person name="Narusaka M."/>
            <person name="Seki M."/>
            <person name="Sakurai T."/>
            <person name="Satou M."/>
            <person name="Tamse R."/>
            <person name="Vaysberg M."/>
            <person name="Wallender E.K."/>
            <person name="Wong C."/>
            <person name="Yamamura Y."/>
            <person name="Yuan S."/>
            <person name="Shinozaki K."/>
            <person name="Davis R.W."/>
            <person name="Theologis A."/>
            <person name="Ecker J.R."/>
        </authorList>
    </citation>
    <scope>NUCLEOTIDE SEQUENCE [LARGE SCALE MRNA]</scope>
    <source>
        <strain>cv. Columbia</strain>
    </source>
</reference>
<reference key="4">
    <citation type="journal article" date="2005" name="BMC Evol. Biol.">
        <title>Genome-wide comparative analysis of the IQD gene families in Arabidopsis thaliana and Oryza sativa.</title>
        <authorList>
            <person name="Abel S."/>
            <person name="Savchenko T."/>
            <person name="Levy M."/>
        </authorList>
    </citation>
    <scope>INTERACTION WITH CALMODULIN</scope>
    <scope>GENE FAMILY</scope>
    <scope>NOMENCLATURE</scope>
    <source>
        <strain>cv. Columbia</strain>
    </source>
</reference>
<reference key="5">
    <citation type="journal article" date="2005" name="Plant J.">
        <title>Arabidopsis IQD1, a novel calmodulin-binding nuclear protein, stimulates glucosinolate accumulation and plant defense.</title>
        <authorList>
            <person name="Levy M."/>
            <person name="Wang Q."/>
            <person name="Kaspi R."/>
            <person name="Parrella M.P."/>
            <person name="Abel S."/>
        </authorList>
    </citation>
    <scope>GENE FAMILY</scope>
</reference>
<reference key="6">
    <citation type="journal article" date="2017" name="Plant Physiol.">
        <title>The IQD family of calmodulin-binding proteins links calcium signaling to microtubules, membrane subdomains, and the nucleus.</title>
        <authorList>
            <person name="Buerstenbinder K."/>
            <person name="Moeller B."/>
            <person name="Ploetner R."/>
            <person name="Stamm G."/>
            <person name="Hause G."/>
            <person name="Mitra D."/>
            <person name="Abel S."/>
        </authorList>
    </citation>
    <scope>SUBCELLULAR LOCATION</scope>
    <source>
        <strain>cv. Columbia</strain>
    </source>
</reference>
<reference key="7">
    <citation type="journal article" date="2017" name="Plant Signal. Behav.">
        <title>Functions of IQD proteins as hubs in cellular calcium and auxin signaling: A toolbox for shape formation and tissue-specification in plants?</title>
        <authorList>
            <person name="Buerstenbinder K."/>
            <person name="Mitra D."/>
            <person name="Quegwer J."/>
        </authorList>
    </citation>
    <scope>REVIEW</scope>
</reference>
<keyword id="KW-0112">Calmodulin-binding</keyword>
<keyword id="KW-0175">Coiled coil</keyword>
<keyword id="KW-0963">Cytoplasm</keyword>
<keyword id="KW-0206">Cytoskeleton</keyword>
<keyword id="KW-0539">Nucleus</keyword>
<keyword id="KW-1185">Reference proteome</keyword>
<dbReference type="EMBL" id="AL132972">
    <property type="protein sequence ID" value="CAC07920.1"/>
    <property type="molecule type" value="Genomic_DNA"/>
</dbReference>
<dbReference type="EMBL" id="CP002686">
    <property type="protein sequence ID" value="AEE78927.1"/>
    <property type="molecule type" value="Genomic_DNA"/>
</dbReference>
<dbReference type="EMBL" id="BT002936">
    <property type="protein sequence ID" value="AAO22750.1"/>
    <property type="molecule type" value="mRNA"/>
</dbReference>
<dbReference type="EMBL" id="BT005639">
    <property type="protein sequence ID" value="AAO64059.1"/>
    <property type="molecule type" value="mRNA"/>
</dbReference>
<dbReference type="PIR" id="T46099">
    <property type="entry name" value="T46099"/>
</dbReference>
<dbReference type="RefSeq" id="NP_190797.1">
    <property type="nucleotide sequence ID" value="NM_115089.3"/>
</dbReference>
<dbReference type="SMR" id="Q9FT53"/>
<dbReference type="FunCoup" id="Q9FT53">
    <property type="interactions" value="70"/>
</dbReference>
<dbReference type="STRING" id="3702.Q9FT53"/>
<dbReference type="iPTMnet" id="Q9FT53"/>
<dbReference type="PaxDb" id="3702-AT3G52290.1"/>
<dbReference type="ProteomicsDB" id="252029"/>
<dbReference type="EnsemblPlants" id="AT3G52290.1">
    <property type="protein sequence ID" value="AT3G52290.1"/>
    <property type="gene ID" value="AT3G52290"/>
</dbReference>
<dbReference type="GeneID" id="824394"/>
<dbReference type="Gramene" id="AT3G52290.1">
    <property type="protein sequence ID" value="AT3G52290.1"/>
    <property type="gene ID" value="AT3G52290"/>
</dbReference>
<dbReference type="KEGG" id="ath:AT3G52290"/>
<dbReference type="Araport" id="AT3G52290"/>
<dbReference type="TAIR" id="AT3G52290">
    <property type="gene designation" value="IQD3"/>
</dbReference>
<dbReference type="eggNOG" id="ENOG502QUAG">
    <property type="taxonomic scope" value="Eukaryota"/>
</dbReference>
<dbReference type="HOGENOM" id="CLU_024547_3_1_1"/>
<dbReference type="InParanoid" id="Q9FT53"/>
<dbReference type="OMA" id="ANLQMKQ"/>
<dbReference type="PhylomeDB" id="Q9FT53"/>
<dbReference type="PRO" id="PR:Q9FT53"/>
<dbReference type="Proteomes" id="UP000006548">
    <property type="component" value="Chromosome 3"/>
</dbReference>
<dbReference type="ExpressionAtlas" id="Q9FT53">
    <property type="expression patterns" value="baseline and differential"/>
</dbReference>
<dbReference type="GO" id="GO:0005737">
    <property type="term" value="C:cytoplasm"/>
    <property type="evidence" value="ECO:0007669"/>
    <property type="project" value="UniProtKB-KW"/>
</dbReference>
<dbReference type="GO" id="GO:0005856">
    <property type="term" value="C:cytoskeleton"/>
    <property type="evidence" value="ECO:0007669"/>
    <property type="project" value="UniProtKB-SubCell"/>
</dbReference>
<dbReference type="GO" id="GO:0005730">
    <property type="term" value="C:nucleolus"/>
    <property type="evidence" value="ECO:0000314"/>
    <property type="project" value="TAIR"/>
</dbReference>
<dbReference type="GO" id="GO:0005516">
    <property type="term" value="F:calmodulin binding"/>
    <property type="evidence" value="ECO:0007669"/>
    <property type="project" value="UniProtKB-KW"/>
</dbReference>
<dbReference type="CDD" id="cd23767">
    <property type="entry name" value="IQCD"/>
    <property type="match status" value="1"/>
</dbReference>
<dbReference type="Gene3D" id="1.20.5.190">
    <property type="match status" value="1"/>
</dbReference>
<dbReference type="InterPro" id="IPR000048">
    <property type="entry name" value="IQ_motif_EF-hand-BS"/>
</dbReference>
<dbReference type="PANTHER" id="PTHR32295">
    <property type="entry name" value="IQ-DOMAIN 5-RELATED"/>
    <property type="match status" value="1"/>
</dbReference>
<dbReference type="PANTHER" id="PTHR32295:SF216">
    <property type="entry name" value="PROTEIN IQ-DOMAIN 3"/>
    <property type="match status" value="1"/>
</dbReference>
<dbReference type="Pfam" id="PF00612">
    <property type="entry name" value="IQ"/>
    <property type="match status" value="1"/>
</dbReference>
<dbReference type="SMART" id="SM00015">
    <property type="entry name" value="IQ"/>
    <property type="match status" value="1"/>
</dbReference>
<dbReference type="PROSITE" id="PS50096">
    <property type="entry name" value="IQ"/>
    <property type="match status" value="1"/>
</dbReference>